<organism>
    <name type="scientific">Listeria innocua serovar 6a (strain ATCC BAA-680 / CLIP 11262)</name>
    <dbReference type="NCBI Taxonomy" id="272626"/>
    <lineage>
        <taxon>Bacteria</taxon>
        <taxon>Bacillati</taxon>
        <taxon>Bacillota</taxon>
        <taxon>Bacilli</taxon>
        <taxon>Bacillales</taxon>
        <taxon>Listeriaceae</taxon>
        <taxon>Listeria</taxon>
    </lineage>
</organism>
<reference key="1">
    <citation type="journal article" date="2001" name="Science">
        <title>Comparative genomics of Listeria species.</title>
        <authorList>
            <person name="Glaser P."/>
            <person name="Frangeul L."/>
            <person name="Buchrieser C."/>
            <person name="Rusniok C."/>
            <person name="Amend A."/>
            <person name="Baquero F."/>
            <person name="Berche P."/>
            <person name="Bloecker H."/>
            <person name="Brandt P."/>
            <person name="Chakraborty T."/>
            <person name="Charbit A."/>
            <person name="Chetouani F."/>
            <person name="Couve E."/>
            <person name="de Daruvar A."/>
            <person name="Dehoux P."/>
            <person name="Domann E."/>
            <person name="Dominguez-Bernal G."/>
            <person name="Duchaud E."/>
            <person name="Durant L."/>
            <person name="Dussurget O."/>
            <person name="Entian K.-D."/>
            <person name="Fsihi H."/>
            <person name="Garcia-del Portillo F."/>
            <person name="Garrido P."/>
            <person name="Gautier L."/>
            <person name="Goebel W."/>
            <person name="Gomez-Lopez N."/>
            <person name="Hain T."/>
            <person name="Hauf J."/>
            <person name="Jackson D."/>
            <person name="Jones L.-M."/>
            <person name="Kaerst U."/>
            <person name="Kreft J."/>
            <person name="Kuhn M."/>
            <person name="Kunst F."/>
            <person name="Kurapkat G."/>
            <person name="Madueno E."/>
            <person name="Maitournam A."/>
            <person name="Mata Vicente J."/>
            <person name="Ng E."/>
            <person name="Nedjari H."/>
            <person name="Nordsiek G."/>
            <person name="Novella S."/>
            <person name="de Pablos B."/>
            <person name="Perez-Diaz J.-C."/>
            <person name="Purcell R."/>
            <person name="Remmel B."/>
            <person name="Rose M."/>
            <person name="Schlueter T."/>
            <person name="Simoes N."/>
            <person name="Tierrez A."/>
            <person name="Vazquez-Boland J.-A."/>
            <person name="Voss H."/>
            <person name="Wehland J."/>
            <person name="Cossart P."/>
        </authorList>
    </citation>
    <scope>NUCLEOTIDE SEQUENCE [LARGE SCALE GENOMIC DNA]</scope>
    <source>
        <strain>ATCC BAA-680 / CLIP 11262</strain>
    </source>
</reference>
<comment type="function">
    <text evidence="1">Endonuclease that is involved in the suppression of homologous recombination and thus may have a key role in the control of bacterial genetic diversity.</text>
</comment>
<comment type="function">
    <text evidence="1">Acts as a ribosome collision sensor, splitting the ribosome into its 2 subunits. Detects stalled/collided 70S ribosomes which it binds and splits by an ATP-hydrolysis driven conformational change. Acts upstream of the ribosome quality control system (RQC), a ribosome-associated complex that mediates the extraction of incompletely synthesized nascent chains from stalled ribosomes and their subsequent degradation. Probably generates substrates for RQC.</text>
</comment>
<comment type="subunit">
    <text evidence="1">Homodimer. Binds to stalled ribosomes, contacting rRNA.</text>
</comment>
<comment type="similarity">
    <text evidence="1">Belongs to the DNA mismatch repair MutS family. MutS2 subfamily.</text>
</comment>
<protein>
    <recommendedName>
        <fullName evidence="1">Endonuclease MutS2</fullName>
        <ecNumber evidence="1">3.1.-.-</ecNumber>
    </recommendedName>
    <alternativeName>
        <fullName evidence="1">Ribosome-associated protein quality control-upstream factor</fullName>
        <shortName evidence="1">RQC-upstream factor</shortName>
        <shortName evidence="1">RqcU</shortName>
        <ecNumber evidence="1">3.6.4.-</ecNumber>
    </alternativeName>
</protein>
<gene>
    <name evidence="1" type="primary">mutS2</name>
    <name evidence="1" type="synonym">rqcU</name>
    <name type="ordered locus">lin1195</name>
</gene>
<dbReference type="EC" id="3.1.-.-" evidence="1"/>
<dbReference type="EC" id="3.6.4.-" evidence="1"/>
<dbReference type="EMBL" id="AL596167">
    <property type="protein sequence ID" value="CAC96426.1"/>
    <property type="molecule type" value="Genomic_DNA"/>
</dbReference>
<dbReference type="PIR" id="AB1582">
    <property type="entry name" value="AB1582"/>
</dbReference>
<dbReference type="RefSeq" id="WP_010990823.1">
    <property type="nucleotide sequence ID" value="NC_003212.1"/>
</dbReference>
<dbReference type="SMR" id="Q92CH6"/>
<dbReference type="STRING" id="272626.gene:17565525"/>
<dbReference type="KEGG" id="lin:lin1195"/>
<dbReference type="eggNOG" id="COG1193">
    <property type="taxonomic scope" value="Bacteria"/>
</dbReference>
<dbReference type="HOGENOM" id="CLU_011252_2_1_9"/>
<dbReference type="OrthoDB" id="9808166at2"/>
<dbReference type="Proteomes" id="UP000002513">
    <property type="component" value="Chromosome"/>
</dbReference>
<dbReference type="GO" id="GO:0005524">
    <property type="term" value="F:ATP binding"/>
    <property type="evidence" value="ECO:0007669"/>
    <property type="project" value="UniProtKB-UniRule"/>
</dbReference>
<dbReference type="GO" id="GO:0016887">
    <property type="term" value="F:ATP hydrolysis activity"/>
    <property type="evidence" value="ECO:0007669"/>
    <property type="project" value="InterPro"/>
</dbReference>
<dbReference type="GO" id="GO:0140664">
    <property type="term" value="F:ATP-dependent DNA damage sensor activity"/>
    <property type="evidence" value="ECO:0007669"/>
    <property type="project" value="InterPro"/>
</dbReference>
<dbReference type="GO" id="GO:0004519">
    <property type="term" value="F:endonuclease activity"/>
    <property type="evidence" value="ECO:0007669"/>
    <property type="project" value="UniProtKB-UniRule"/>
</dbReference>
<dbReference type="GO" id="GO:0030983">
    <property type="term" value="F:mismatched DNA binding"/>
    <property type="evidence" value="ECO:0007669"/>
    <property type="project" value="InterPro"/>
</dbReference>
<dbReference type="GO" id="GO:0043023">
    <property type="term" value="F:ribosomal large subunit binding"/>
    <property type="evidence" value="ECO:0007669"/>
    <property type="project" value="UniProtKB-UniRule"/>
</dbReference>
<dbReference type="GO" id="GO:0019843">
    <property type="term" value="F:rRNA binding"/>
    <property type="evidence" value="ECO:0007669"/>
    <property type="project" value="UniProtKB-UniRule"/>
</dbReference>
<dbReference type="GO" id="GO:0006298">
    <property type="term" value="P:mismatch repair"/>
    <property type="evidence" value="ECO:0007669"/>
    <property type="project" value="InterPro"/>
</dbReference>
<dbReference type="GO" id="GO:0045910">
    <property type="term" value="P:negative regulation of DNA recombination"/>
    <property type="evidence" value="ECO:0007669"/>
    <property type="project" value="InterPro"/>
</dbReference>
<dbReference type="GO" id="GO:0072344">
    <property type="term" value="P:rescue of stalled ribosome"/>
    <property type="evidence" value="ECO:0007669"/>
    <property type="project" value="UniProtKB-UniRule"/>
</dbReference>
<dbReference type="FunFam" id="3.40.50.300:FF:000830">
    <property type="entry name" value="Endonuclease MutS2"/>
    <property type="match status" value="1"/>
</dbReference>
<dbReference type="Gene3D" id="3.30.1370.110">
    <property type="match status" value="1"/>
</dbReference>
<dbReference type="Gene3D" id="3.40.50.300">
    <property type="entry name" value="P-loop containing nucleotide triphosphate hydrolases"/>
    <property type="match status" value="1"/>
</dbReference>
<dbReference type="HAMAP" id="MF_00092">
    <property type="entry name" value="MutS2"/>
    <property type="match status" value="1"/>
</dbReference>
<dbReference type="InterPro" id="IPR000432">
    <property type="entry name" value="DNA_mismatch_repair_MutS_C"/>
</dbReference>
<dbReference type="InterPro" id="IPR007696">
    <property type="entry name" value="DNA_mismatch_repair_MutS_core"/>
</dbReference>
<dbReference type="InterPro" id="IPR036187">
    <property type="entry name" value="DNA_mismatch_repair_MutS_sf"/>
</dbReference>
<dbReference type="InterPro" id="IPR046893">
    <property type="entry name" value="MSSS"/>
</dbReference>
<dbReference type="InterPro" id="IPR045076">
    <property type="entry name" value="MutS"/>
</dbReference>
<dbReference type="InterPro" id="IPR005747">
    <property type="entry name" value="MutS2"/>
</dbReference>
<dbReference type="InterPro" id="IPR027417">
    <property type="entry name" value="P-loop_NTPase"/>
</dbReference>
<dbReference type="InterPro" id="IPR002625">
    <property type="entry name" value="Smr_dom"/>
</dbReference>
<dbReference type="InterPro" id="IPR036063">
    <property type="entry name" value="Smr_dom_sf"/>
</dbReference>
<dbReference type="NCBIfam" id="TIGR01069">
    <property type="entry name" value="mutS2"/>
    <property type="match status" value="1"/>
</dbReference>
<dbReference type="PANTHER" id="PTHR48466:SF2">
    <property type="entry name" value="OS10G0509000 PROTEIN"/>
    <property type="match status" value="1"/>
</dbReference>
<dbReference type="PANTHER" id="PTHR48466">
    <property type="entry name" value="OS10G0509000 PROTEIN-RELATED"/>
    <property type="match status" value="1"/>
</dbReference>
<dbReference type="Pfam" id="PF20297">
    <property type="entry name" value="MSSS"/>
    <property type="match status" value="1"/>
</dbReference>
<dbReference type="Pfam" id="PF00488">
    <property type="entry name" value="MutS_V"/>
    <property type="match status" value="1"/>
</dbReference>
<dbReference type="Pfam" id="PF01713">
    <property type="entry name" value="Smr"/>
    <property type="match status" value="1"/>
</dbReference>
<dbReference type="PIRSF" id="PIRSF005814">
    <property type="entry name" value="MutS_YshD"/>
    <property type="match status" value="1"/>
</dbReference>
<dbReference type="SMART" id="SM00534">
    <property type="entry name" value="MUTSac"/>
    <property type="match status" value="1"/>
</dbReference>
<dbReference type="SMART" id="SM00533">
    <property type="entry name" value="MUTSd"/>
    <property type="match status" value="1"/>
</dbReference>
<dbReference type="SMART" id="SM00463">
    <property type="entry name" value="SMR"/>
    <property type="match status" value="1"/>
</dbReference>
<dbReference type="SUPFAM" id="SSF48334">
    <property type="entry name" value="DNA repair protein MutS, domain III"/>
    <property type="match status" value="1"/>
</dbReference>
<dbReference type="SUPFAM" id="SSF52540">
    <property type="entry name" value="P-loop containing nucleoside triphosphate hydrolases"/>
    <property type="match status" value="1"/>
</dbReference>
<dbReference type="SUPFAM" id="SSF160443">
    <property type="entry name" value="SMR domain-like"/>
    <property type="match status" value="1"/>
</dbReference>
<dbReference type="PROSITE" id="PS00486">
    <property type="entry name" value="DNA_MISMATCH_REPAIR_2"/>
    <property type="match status" value="1"/>
</dbReference>
<dbReference type="PROSITE" id="PS50828">
    <property type="entry name" value="SMR"/>
    <property type="match status" value="1"/>
</dbReference>
<proteinExistence type="inferred from homology"/>
<accession>Q92CH6</accession>
<feature type="chain" id="PRO_0000115224" description="Endonuclease MutS2">
    <location>
        <begin position="1"/>
        <end position="785"/>
    </location>
</feature>
<feature type="domain" description="Smr" evidence="1">
    <location>
        <begin position="710"/>
        <end position="785"/>
    </location>
</feature>
<feature type="binding site" evidence="1">
    <location>
        <begin position="335"/>
        <end position="342"/>
    </location>
    <ligand>
        <name>ATP</name>
        <dbReference type="ChEBI" id="CHEBI:30616"/>
    </ligand>
</feature>
<keyword id="KW-0067">ATP-binding</keyword>
<keyword id="KW-0238">DNA-binding</keyword>
<keyword id="KW-0255">Endonuclease</keyword>
<keyword id="KW-0378">Hydrolase</keyword>
<keyword id="KW-0540">Nuclease</keyword>
<keyword id="KW-0547">Nucleotide-binding</keyword>
<keyword id="KW-0694">RNA-binding</keyword>
<keyword id="KW-0699">rRNA-binding</keyword>
<name>MUTS2_LISIN</name>
<sequence>MEKKVEAILEFDKIKKQLAEFASSSLGEQAIYELAPATDFQVVQKAQLETEEGAKIIRLRGSAPITGLTDVFAHLKRLEIGGDLNGLEIYQIGSNLRVSRQMKNFMNDLLEIGVEIPLLGALSDELLVLKDVEEDIAISIDESGKILDTASEALSSIRRTLRRTEDRVREKLESYLRDRNASKMLSDAVITIRNDRYVIPVKQEYKGHYGGIVHDQSASGQTLFIEPQSVVDLNNERKALQAKEKQEIERILAEISASLAGWINEIHHNTFILGRFDFILAKARFGKALKAVTPHLSDTGIVHLIAARHPLLDAEKVVANDIYLGEDFSTIVITGPNTGGKTITLKTLGLLTLMAQSGLQIPAQEDSTIAVFENVFADIGDEQSIEQSLSTFSSHMTNIVSILEKVNHKSLILYDELGAGTDPQEGAALAIAILDASHKKGASVVATTHYPELKAYGYNRAHATNASVEFNVETLSPTYKLLIGVPGRSNAFDISRRLGLSESIITEARSLVDTESADLNDMISSLEEKRNLAEREYEEARELARGADALLKDLQKEITNYYQQKDKLLEQANEKAAGIVEKAETEAEEIIHELRTMQLNGAAGIKEHELIDAKTRLGKAKPKTINKAIPKAPKQKPHVFQAGDNVRVLSLGQKGTLLNKISDKEWNVQIGIIKMKIKTTDLEYIEPEKPKKQRIITSVHSSDSPAKSELDLRGERYEDAIQKVDKYLDEALLAGYPQVAIIHGKGTGALRTGVTEYLKNHRMVKSIRFGAAAEGGNGVTIVEFK</sequence>
<evidence type="ECO:0000255" key="1">
    <source>
        <dbReference type="HAMAP-Rule" id="MF_00092"/>
    </source>
</evidence>